<reference key="1">
    <citation type="journal article" date="2009" name="Genome Res.">
        <title>Newly introduced genomic prophage islands are critical determinants of in vivo competitiveness in the Liverpool epidemic strain of Pseudomonas aeruginosa.</title>
        <authorList>
            <person name="Winstanley C."/>
            <person name="Langille M.G.I."/>
            <person name="Fothergill J.L."/>
            <person name="Kukavica-Ibrulj I."/>
            <person name="Paradis-Bleau C."/>
            <person name="Sanschagrin F."/>
            <person name="Thomson N.R."/>
            <person name="Winsor G.L."/>
            <person name="Quail M.A."/>
            <person name="Lennard N."/>
            <person name="Bignell A."/>
            <person name="Clarke L."/>
            <person name="Seeger K."/>
            <person name="Saunders D."/>
            <person name="Harris D."/>
            <person name="Parkhill J."/>
            <person name="Hancock R.E.W."/>
            <person name="Brinkman F.S.L."/>
            <person name="Levesque R.C."/>
        </authorList>
    </citation>
    <scope>NUCLEOTIDE SEQUENCE [LARGE SCALE GENOMIC DNA]</scope>
    <source>
        <strain>LESB58</strain>
    </source>
</reference>
<name>KAD_PSEA8</name>
<proteinExistence type="inferred from homology"/>
<gene>
    <name evidence="1" type="primary">adk</name>
    <name type="ordered locus">PLES_12981</name>
</gene>
<accession>B7V109</accession>
<comment type="function">
    <text evidence="1">Catalyzes the reversible transfer of the terminal phosphate group between ATP and AMP. Plays an important role in cellular energy homeostasis and in adenine nucleotide metabolism.</text>
</comment>
<comment type="catalytic activity">
    <reaction evidence="1">
        <text>AMP + ATP = 2 ADP</text>
        <dbReference type="Rhea" id="RHEA:12973"/>
        <dbReference type="ChEBI" id="CHEBI:30616"/>
        <dbReference type="ChEBI" id="CHEBI:456215"/>
        <dbReference type="ChEBI" id="CHEBI:456216"/>
        <dbReference type="EC" id="2.7.4.3"/>
    </reaction>
</comment>
<comment type="pathway">
    <text evidence="1">Purine metabolism; AMP biosynthesis via salvage pathway; AMP from ADP: step 1/1.</text>
</comment>
<comment type="subunit">
    <text evidence="1">Monomer.</text>
</comment>
<comment type="subcellular location">
    <subcellularLocation>
        <location evidence="1">Cytoplasm</location>
    </subcellularLocation>
</comment>
<comment type="domain">
    <text evidence="1">Consists of three domains, a large central CORE domain and two small peripheral domains, NMPbind and LID, which undergo movements during catalysis. The LID domain closes over the site of phosphoryl transfer upon ATP binding. Assembling and dissambling the active center during each catalytic cycle provides an effective means to prevent ATP hydrolysis.</text>
</comment>
<comment type="similarity">
    <text evidence="1">Belongs to the adenylate kinase family.</text>
</comment>
<evidence type="ECO:0000255" key="1">
    <source>
        <dbReference type="HAMAP-Rule" id="MF_00235"/>
    </source>
</evidence>
<feature type="chain" id="PRO_1000191162" description="Adenylate kinase">
    <location>
        <begin position="1"/>
        <end position="215"/>
    </location>
</feature>
<feature type="region of interest" description="NMP" evidence="1">
    <location>
        <begin position="30"/>
        <end position="59"/>
    </location>
</feature>
<feature type="region of interest" description="LID" evidence="1">
    <location>
        <begin position="122"/>
        <end position="159"/>
    </location>
</feature>
<feature type="binding site" evidence="1">
    <location>
        <begin position="10"/>
        <end position="15"/>
    </location>
    <ligand>
        <name>ATP</name>
        <dbReference type="ChEBI" id="CHEBI:30616"/>
    </ligand>
</feature>
<feature type="binding site" evidence="1">
    <location>
        <position position="31"/>
    </location>
    <ligand>
        <name>AMP</name>
        <dbReference type="ChEBI" id="CHEBI:456215"/>
    </ligand>
</feature>
<feature type="binding site" evidence="1">
    <location>
        <position position="36"/>
    </location>
    <ligand>
        <name>AMP</name>
        <dbReference type="ChEBI" id="CHEBI:456215"/>
    </ligand>
</feature>
<feature type="binding site" evidence="1">
    <location>
        <begin position="57"/>
        <end position="59"/>
    </location>
    <ligand>
        <name>AMP</name>
        <dbReference type="ChEBI" id="CHEBI:456215"/>
    </ligand>
</feature>
<feature type="binding site" evidence="1">
    <location>
        <begin position="85"/>
        <end position="88"/>
    </location>
    <ligand>
        <name>AMP</name>
        <dbReference type="ChEBI" id="CHEBI:456215"/>
    </ligand>
</feature>
<feature type="binding site" evidence="1">
    <location>
        <position position="92"/>
    </location>
    <ligand>
        <name>AMP</name>
        <dbReference type="ChEBI" id="CHEBI:456215"/>
    </ligand>
</feature>
<feature type="binding site" evidence="1">
    <location>
        <position position="123"/>
    </location>
    <ligand>
        <name>ATP</name>
        <dbReference type="ChEBI" id="CHEBI:30616"/>
    </ligand>
</feature>
<feature type="binding site" evidence="1">
    <location>
        <begin position="132"/>
        <end position="133"/>
    </location>
    <ligand>
        <name>ATP</name>
        <dbReference type="ChEBI" id="CHEBI:30616"/>
    </ligand>
</feature>
<feature type="binding site" evidence="1">
    <location>
        <position position="156"/>
    </location>
    <ligand>
        <name>AMP</name>
        <dbReference type="ChEBI" id="CHEBI:456215"/>
    </ligand>
</feature>
<feature type="binding site" evidence="1">
    <location>
        <position position="167"/>
    </location>
    <ligand>
        <name>AMP</name>
        <dbReference type="ChEBI" id="CHEBI:456215"/>
    </ligand>
</feature>
<feature type="binding site" evidence="1">
    <location>
        <position position="201"/>
    </location>
    <ligand>
        <name>ATP</name>
        <dbReference type="ChEBI" id="CHEBI:30616"/>
    </ligand>
</feature>
<keyword id="KW-0067">ATP-binding</keyword>
<keyword id="KW-0963">Cytoplasm</keyword>
<keyword id="KW-0418">Kinase</keyword>
<keyword id="KW-0545">Nucleotide biosynthesis</keyword>
<keyword id="KW-0547">Nucleotide-binding</keyword>
<keyword id="KW-0808">Transferase</keyword>
<protein>
    <recommendedName>
        <fullName evidence="1">Adenylate kinase</fullName>
        <shortName evidence="1">AK</shortName>
        <ecNumber evidence="1">2.7.4.3</ecNumber>
    </recommendedName>
    <alternativeName>
        <fullName evidence="1">ATP-AMP transphosphorylase</fullName>
    </alternativeName>
    <alternativeName>
        <fullName evidence="1">ATP:AMP phosphotransferase</fullName>
    </alternativeName>
    <alternativeName>
        <fullName evidence="1">Adenylate monophosphate kinase</fullName>
    </alternativeName>
</protein>
<sequence>MRVILLGAPGAGKGTQARFITEKFGIPQISTGDMLRAAVKAGSPLGQQVKGVMDSGGLVSDDIIIALIKERITEADCAKGFLFDGFPRTIPQAEALKDAGVTIDHVVEIAVDDEEIVSRIAGRRVHPASGRVYHTEHNPPKVAGKDDVTGEELIQREDDKEETVRHRLSVYHSQTKPLVDFYQKLSAAEGTPKYHSIAGVGSVEQITAKVLSALS</sequence>
<dbReference type="EC" id="2.7.4.3" evidence="1"/>
<dbReference type="EMBL" id="FM209186">
    <property type="protein sequence ID" value="CAW26025.1"/>
    <property type="molecule type" value="Genomic_DNA"/>
</dbReference>
<dbReference type="RefSeq" id="WP_003092485.1">
    <property type="nucleotide sequence ID" value="NC_011770.1"/>
</dbReference>
<dbReference type="SMR" id="B7V109"/>
<dbReference type="KEGG" id="pag:PLES_12981"/>
<dbReference type="HOGENOM" id="CLU_032354_1_2_6"/>
<dbReference type="UniPathway" id="UPA00588">
    <property type="reaction ID" value="UER00649"/>
</dbReference>
<dbReference type="GO" id="GO:0005737">
    <property type="term" value="C:cytoplasm"/>
    <property type="evidence" value="ECO:0007669"/>
    <property type="project" value="UniProtKB-SubCell"/>
</dbReference>
<dbReference type="GO" id="GO:0004017">
    <property type="term" value="F:adenylate kinase activity"/>
    <property type="evidence" value="ECO:0007669"/>
    <property type="project" value="UniProtKB-UniRule"/>
</dbReference>
<dbReference type="GO" id="GO:0005524">
    <property type="term" value="F:ATP binding"/>
    <property type="evidence" value="ECO:0007669"/>
    <property type="project" value="UniProtKB-UniRule"/>
</dbReference>
<dbReference type="GO" id="GO:0044209">
    <property type="term" value="P:AMP salvage"/>
    <property type="evidence" value="ECO:0007669"/>
    <property type="project" value="UniProtKB-UniRule"/>
</dbReference>
<dbReference type="CDD" id="cd01428">
    <property type="entry name" value="ADK"/>
    <property type="match status" value="1"/>
</dbReference>
<dbReference type="FunFam" id="3.40.50.300:FF:000106">
    <property type="entry name" value="Adenylate kinase mitochondrial"/>
    <property type="match status" value="1"/>
</dbReference>
<dbReference type="Gene3D" id="3.40.50.300">
    <property type="entry name" value="P-loop containing nucleotide triphosphate hydrolases"/>
    <property type="match status" value="1"/>
</dbReference>
<dbReference type="HAMAP" id="MF_00235">
    <property type="entry name" value="Adenylate_kinase_Adk"/>
    <property type="match status" value="1"/>
</dbReference>
<dbReference type="InterPro" id="IPR006259">
    <property type="entry name" value="Adenyl_kin_sub"/>
</dbReference>
<dbReference type="InterPro" id="IPR000850">
    <property type="entry name" value="Adenylat/UMP-CMP_kin"/>
</dbReference>
<dbReference type="InterPro" id="IPR033690">
    <property type="entry name" value="Adenylat_kinase_CS"/>
</dbReference>
<dbReference type="InterPro" id="IPR007862">
    <property type="entry name" value="Adenylate_kinase_lid-dom"/>
</dbReference>
<dbReference type="InterPro" id="IPR027417">
    <property type="entry name" value="P-loop_NTPase"/>
</dbReference>
<dbReference type="NCBIfam" id="TIGR01351">
    <property type="entry name" value="adk"/>
    <property type="match status" value="1"/>
</dbReference>
<dbReference type="NCBIfam" id="NF001379">
    <property type="entry name" value="PRK00279.1-1"/>
    <property type="match status" value="1"/>
</dbReference>
<dbReference type="NCBIfam" id="NF001380">
    <property type="entry name" value="PRK00279.1-2"/>
    <property type="match status" value="1"/>
</dbReference>
<dbReference type="NCBIfam" id="NF001381">
    <property type="entry name" value="PRK00279.1-3"/>
    <property type="match status" value="1"/>
</dbReference>
<dbReference type="NCBIfam" id="NF011100">
    <property type="entry name" value="PRK14527.1"/>
    <property type="match status" value="1"/>
</dbReference>
<dbReference type="PANTHER" id="PTHR23359">
    <property type="entry name" value="NUCLEOTIDE KINASE"/>
    <property type="match status" value="1"/>
</dbReference>
<dbReference type="Pfam" id="PF00406">
    <property type="entry name" value="ADK"/>
    <property type="match status" value="1"/>
</dbReference>
<dbReference type="Pfam" id="PF05191">
    <property type="entry name" value="ADK_lid"/>
    <property type="match status" value="1"/>
</dbReference>
<dbReference type="PRINTS" id="PR00094">
    <property type="entry name" value="ADENYLTKNASE"/>
</dbReference>
<dbReference type="SUPFAM" id="SSF52540">
    <property type="entry name" value="P-loop containing nucleoside triphosphate hydrolases"/>
    <property type="match status" value="1"/>
</dbReference>
<dbReference type="PROSITE" id="PS00113">
    <property type="entry name" value="ADENYLATE_KINASE"/>
    <property type="match status" value="1"/>
</dbReference>
<organism>
    <name type="scientific">Pseudomonas aeruginosa (strain LESB58)</name>
    <dbReference type="NCBI Taxonomy" id="557722"/>
    <lineage>
        <taxon>Bacteria</taxon>
        <taxon>Pseudomonadati</taxon>
        <taxon>Pseudomonadota</taxon>
        <taxon>Gammaproteobacteria</taxon>
        <taxon>Pseudomonadales</taxon>
        <taxon>Pseudomonadaceae</taxon>
        <taxon>Pseudomonas</taxon>
    </lineage>
</organism>